<organism>
    <name type="scientific">Pisum sativum</name>
    <name type="common">Garden pea</name>
    <name type="synonym">Lathyrus oleraceus</name>
    <dbReference type="NCBI Taxonomy" id="3888"/>
    <lineage>
        <taxon>Eukaryota</taxon>
        <taxon>Viridiplantae</taxon>
        <taxon>Streptophyta</taxon>
        <taxon>Embryophyta</taxon>
        <taxon>Tracheophyta</taxon>
        <taxon>Spermatophyta</taxon>
        <taxon>Magnoliopsida</taxon>
        <taxon>eudicotyledons</taxon>
        <taxon>Gunneridae</taxon>
        <taxon>Pentapetalae</taxon>
        <taxon>rosids</taxon>
        <taxon>fabids</taxon>
        <taxon>Fabales</taxon>
        <taxon>Fabaceae</taxon>
        <taxon>Papilionoideae</taxon>
        <taxon>50 kb inversion clade</taxon>
        <taxon>NPAAA clade</taxon>
        <taxon>Hologalegina</taxon>
        <taxon>IRL clade</taxon>
        <taxon>Fabeae</taxon>
        <taxon>Pisum</taxon>
    </lineage>
</organism>
<sequence>MASTFSATTSSCNLSSSAAISSFPLAAGKRNANKVVLPRKNRNVKVSAMAKELHFNKDGSAIKKLQNGVNKLADLVGVTLGPKGRNVVLESKYGSPKIVNDGVTVAKEVELEDPVENIGAKLVRQAAAKTNDLAGDGTTTSVVLAQGLIAEGVKVVAAGANPVLITRGIEKTSKALVAELKKMSKEVEDSELADVAAVSAGNNHEVGNMIAEALSKVGRKGVVTLEEGKSAENSLYVVEGMQFDRGYISPYFVTDSEKMTVEFENCKLLLVDKKITNARDLINILEDAIRSGFPIVIIAEDIEQEALATLVVNKLRGSLKIAALKAPGFGERKSQYLDDIAILTGGTVIREEVGLTLDKADKEVLGNAAKVVLTKDTTTIVGDGSTQEAVNKRVSQIKNQIEAAEQEYEKEKLSERIAKLSGGVAVIQVGAQTETELKEKKLRVEDALNATKAAVEEGIVVGGGCTLLRLASKVDAIKDTLANDEEKVGADIVKRALSYPLKLIAKNAGVNGSVVSEKVLSSDNPKYGYNAATGKYEDLMAAGIIDPTKVVRCCLEHASSVAKTFLMSDCVVVEIKEPESAPVGNPMDNSGYGNI</sequence>
<comment type="function">
    <text>This protein binds RuBisCO small and large subunits and is implicated in the assembly of the enzyme oligomer.</text>
</comment>
<comment type="subunit">
    <text>Oligomer of probably six alpha and six beta subunits.</text>
</comment>
<comment type="subcellular location">
    <subcellularLocation>
        <location>Plastid</location>
        <location>Chloroplast</location>
    </subcellularLocation>
</comment>
<comment type="miscellaneous">
    <text>This protein shows ATPase activity.</text>
</comment>
<comment type="similarity">
    <text evidence="2">Belongs to the chaperonin (HSP60) family.</text>
</comment>
<reference key="1">
    <citation type="journal article" date="1995" name="J. Biol. Chem.">
        <title>Functional characterization of the higher plant chloroplast chaperonins.</title>
        <authorList>
            <person name="Viitanen P.V."/>
            <person name="Schmidt M."/>
            <person name="Buchner J."/>
            <person name="Suzuki T."/>
            <person name="Vierling E."/>
            <person name="Dickson R.R."/>
            <person name="Lorimer G.H."/>
            <person name="Gatenby A."/>
            <person name="Soll J."/>
        </authorList>
    </citation>
    <scope>NUCLEOTIDE SEQUENCE [MRNA]</scope>
</reference>
<reference key="2">
    <citation type="journal article" date="1987" name="Eur. J. Biochem.">
        <title>Dissociation of the ribulosebisphosphate-carboxylase large-subunit binding protein into dissimilar subunits.</title>
        <authorList>
            <person name="Musgrove J.E."/>
            <person name="Johnson R.A."/>
            <person name="Ellis R.J."/>
        </authorList>
    </citation>
    <scope>PROTEIN SEQUENCE OF 50-79</scope>
    <source>
        <strain>cv. Feltham First</strain>
    </source>
</reference>
<evidence type="ECO:0000269" key="1">
    <source>
    </source>
</evidence>
<evidence type="ECO:0000305" key="2"/>
<protein>
    <recommendedName>
        <fullName>RuBisCO large subunit-binding protein subunit beta, chloroplastic</fullName>
    </recommendedName>
    <alternativeName>
        <fullName>60 kDa chaperonin subunit beta</fullName>
    </alternativeName>
    <alternativeName>
        <fullName>CPN-60 beta</fullName>
    </alternativeName>
</protein>
<keyword id="KW-0067">ATP-binding</keyword>
<keyword id="KW-0143">Chaperone</keyword>
<keyword id="KW-0150">Chloroplast</keyword>
<keyword id="KW-0903">Direct protein sequencing</keyword>
<keyword id="KW-0547">Nucleotide-binding</keyword>
<keyword id="KW-0934">Plastid</keyword>
<keyword id="KW-0809">Transit peptide</keyword>
<dbReference type="EMBL" id="U21139">
    <property type="protein sequence ID" value="AAA66365.1"/>
    <property type="molecule type" value="mRNA"/>
</dbReference>
<dbReference type="PIR" id="T06412">
    <property type="entry name" value="T06412"/>
</dbReference>
<dbReference type="RefSeq" id="NP_001414333.1">
    <property type="nucleotide sequence ID" value="NM_001427404.1"/>
</dbReference>
<dbReference type="SMR" id="P08927"/>
<dbReference type="EnsemblPlants" id="Psat1g001680.1">
    <property type="protein sequence ID" value="Psat1g001680.1.cds"/>
    <property type="gene ID" value="Psat1g001680"/>
</dbReference>
<dbReference type="GeneID" id="127119762"/>
<dbReference type="Gramene" id="Psat1g001680.1">
    <property type="protein sequence ID" value="Psat1g001680.1.cds"/>
    <property type="gene ID" value="Psat1g001680"/>
</dbReference>
<dbReference type="OrthoDB" id="1733909at2759"/>
<dbReference type="GO" id="GO:0009507">
    <property type="term" value="C:chloroplast"/>
    <property type="evidence" value="ECO:0007669"/>
    <property type="project" value="UniProtKB-SubCell"/>
</dbReference>
<dbReference type="GO" id="GO:0005524">
    <property type="term" value="F:ATP binding"/>
    <property type="evidence" value="ECO:0007669"/>
    <property type="project" value="UniProtKB-KW"/>
</dbReference>
<dbReference type="GO" id="GO:0140662">
    <property type="term" value="F:ATP-dependent protein folding chaperone"/>
    <property type="evidence" value="ECO:0007669"/>
    <property type="project" value="InterPro"/>
</dbReference>
<dbReference type="GO" id="GO:0042026">
    <property type="term" value="P:protein refolding"/>
    <property type="evidence" value="ECO:0007669"/>
    <property type="project" value="InterPro"/>
</dbReference>
<dbReference type="CDD" id="cd03344">
    <property type="entry name" value="GroEL"/>
    <property type="match status" value="1"/>
</dbReference>
<dbReference type="FunFam" id="3.50.7.10:FF:000001">
    <property type="entry name" value="60 kDa chaperonin"/>
    <property type="match status" value="1"/>
</dbReference>
<dbReference type="Gene3D" id="3.50.7.10">
    <property type="entry name" value="GroEL"/>
    <property type="match status" value="1"/>
</dbReference>
<dbReference type="Gene3D" id="1.10.560.10">
    <property type="entry name" value="GroEL-like equatorial domain"/>
    <property type="match status" value="1"/>
</dbReference>
<dbReference type="Gene3D" id="3.30.260.10">
    <property type="entry name" value="TCP-1-like chaperonin intermediate domain"/>
    <property type="match status" value="1"/>
</dbReference>
<dbReference type="HAMAP" id="MF_00600">
    <property type="entry name" value="CH60"/>
    <property type="match status" value="1"/>
</dbReference>
<dbReference type="InterPro" id="IPR018370">
    <property type="entry name" value="Chaperonin_Cpn60_CS"/>
</dbReference>
<dbReference type="InterPro" id="IPR001844">
    <property type="entry name" value="Cpn60/GroEL"/>
</dbReference>
<dbReference type="InterPro" id="IPR002423">
    <property type="entry name" value="Cpn60/GroEL/TCP-1"/>
</dbReference>
<dbReference type="InterPro" id="IPR027409">
    <property type="entry name" value="GroEL-like_apical_dom_sf"/>
</dbReference>
<dbReference type="InterPro" id="IPR027413">
    <property type="entry name" value="GROEL-like_equatorial_sf"/>
</dbReference>
<dbReference type="InterPro" id="IPR027410">
    <property type="entry name" value="TCP-1-like_intermed_sf"/>
</dbReference>
<dbReference type="NCBIfam" id="TIGR02348">
    <property type="entry name" value="GroEL"/>
    <property type="match status" value="1"/>
</dbReference>
<dbReference type="NCBIfam" id="NF000592">
    <property type="entry name" value="PRK00013.1"/>
    <property type="match status" value="1"/>
</dbReference>
<dbReference type="NCBIfam" id="NF009487">
    <property type="entry name" value="PRK12849.1"/>
    <property type="match status" value="1"/>
</dbReference>
<dbReference type="NCBIfam" id="NF009488">
    <property type="entry name" value="PRK12850.1"/>
    <property type="match status" value="1"/>
</dbReference>
<dbReference type="NCBIfam" id="NF009489">
    <property type="entry name" value="PRK12851.1"/>
    <property type="match status" value="1"/>
</dbReference>
<dbReference type="PANTHER" id="PTHR45633">
    <property type="entry name" value="60 KDA HEAT SHOCK PROTEIN, MITOCHONDRIAL"/>
    <property type="match status" value="1"/>
</dbReference>
<dbReference type="Pfam" id="PF00118">
    <property type="entry name" value="Cpn60_TCP1"/>
    <property type="match status" value="1"/>
</dbReference>
<dbReference type="PRINTS" id="PR00298">
    <property type="entry name" value="CHAPERONIN60"/>
</dbReference>
<dbReference type="SUPFAM" id="SSF52029">
    <property type="entry name" value="GroEL apical domain-like"/>
    <property type="match status" value="1"/>
</dbReference>
<dbReference type="SUPFAM" id="SSF48592">
    <property type="entry name" value="GroEL equatorial domain-like"/>
    <property type="match status" value="1"/>
</dbReference>
<dbReference type="SUPFAM" id="SSF54849">
    <property type="entry name" value="GroEL-intermediate domain like"/>
    <property type="match status" value="1"/>
</dbReference>
<dbReference type="PROSITE" id="PS00296">
    <property type="entry name" value="CHAPERONINS_CPN60"/>
    <property type="match status" value="1"/>
</dbReference>
<feature type="transit peptide" description="Chloroplast" evidence="1">
    <location>
        <begin position="1"/>
        <end position="49"/>
    </location>
</feature>
<feature type="chain" id="PRO_0000005024" description="RuBisCO large subunit-binding protein subunit beta, chloroplastic">
    <location>
        <begin position="50"/>
        <end position="595"/>
    </location>
</feature>
<feature type="sequence conflict" description="In Ref. 2; AA sequence." evidence="2" ref="2">
    <original>K</original>
    <variation>R</variation>
    <location>
        <position position="63"/>
    </location>
</feature>
<name>RUBB_PEA</name>
<proteinExistence type="evidence at protein level"/>
<accession>P08927</accession>
<accession>Q37267</accession>